<feature type="chain" id="PRO_0000459363" description="Fatty acid elongase 2">
    <location>
        <begin position="1"/>
        <end position="271"/>
    </location>
</feature>
<feature type="transmembrane region" description="Helical" evidence="3">
    <location>
        <begin position="16"/>
        <end position="36"/>
    </location>
</feature>
<feature type="transmembrane region" description="Helical" evidence="3">
    <location>
        <begin position="59"/>
        <end position="79"/>
    </location>
</feature>
<feature type="transmembrane region" description="Helical" evidence="3">
    <location>
        <begin position="110"/>
        <end position="130"/>
    </location>
</feature>
<feature type="transmembrane region" description="Helical" evidence="3">
    <location>
        <begin position="162"/>
        <end position="182"/>
    </location>
</feature>
<feature type="transmembrane region" description="Helical" evidence="3">
    <location>
        <begin position="194"/>
        <end position="214"/>
    </location>
</feature>
<feature type="transmembrane region" description="Helical" evidence="3">
    <location>
        <begin position="241"/>
        <end position="261"/>
    </location>
</feature>
<feature type="short sequence motif" description="HxxHH motif" evidence="7">
    <location>
        <begin position="140"/>
        <end position="144"/>
    </location>
</feature>
<feature type="active site" description="Nucleophile" evidence="1">
    <location>
        <position position="143"/>
    </location>
</feature>
<feature type="glycosylation site" description="N-linked (GlcNAc...) asparagine" evidence="4">
    <location>
        <position position="52"/>
    </location>
</feature>
<reference evidence="10" key="1">
    <citation type="journal article" date="2005" name="Science">
        <title>Comparative genomics of trypanosomatid parasitic protozoa.</title>
        <authorList>
            <person name="El-Sayed N.M."/>
            <person name="Myler P.J."/>
            <person name="Blandin G."/>
            <person name="Berriman M."/>
            <person name="Crabtree J."/>
            <person name="Aggarwal G."/>
            <person name="Caler E."/>
            <person name="Renauld H."/>
            <person name="Worthey E.A."/>
            <person name="Hertz-Fowler C."/>
            <person name="Ghedin E."/>
            <person name="Peacock C."/>
            <person name="Bartholomeu D.C."/>
            <person name="Haas B.J."/>
            <person name="Tran A.N."/>
            <person name="Wortman J.R."/>
            <person name="Alsmark U.C."/>
            <person name="Angiuoli S."/>
            <person name="Anupama A."/>
            <person name="Badger J."/>
            <person name="Bringaud F."/>
            <person name="Cadag E."/>
            <person name="Carlton J.M."/>
            <person name="Cerqueira G.C."/>
            <person name="Creasy T."/>
            <person name="Delcher A.L."/>
            <person name="Djikeng A."/>
            <person name="Embley T.M."/>
            <person name="Hauser C."/>
            <person name="Ivens A.C."/>
            <person name="Kummerfeld S.K."/>
            <person name="Pereira-Leal J.B."/>
            <person name="Nilsson D."/>
            <person name="Peterson J."/>
            <person name="Salzberg S.L."/>
            <person name="Shallom J."/>
            <person name="Silva J.C."/>
            <person name="Sundaram J."/>
            <person name="Westenberger S."/>
            <person name="White O."/>
            <person name="Melville S.E."/>
            <person name="Donelson J.E."/>
            <person name="Andersson B."/>
            <person name="Stuart K.D."/>
            <person name="Hall N."/>
        </authorList>
    </citation>
    <scope>NUCLEOTIDE SEQUENCE [LARGE SCALE GENOMIC DNA]</scope>
    <source>
        <strain evidence="10">927/4 GUTat10.1</strain>
    </source>
</reference>
<reference evidence="11" key="2">
    <citation type="journal article" date="2005" name="Science">
        <title>The genome of the African trypanosome Trypanosoma brucei.</title>
        <authorList>
            <person name="Berriman M."/>
            <person name="Ghedin E."/>
            <person name="Hertz-Fowler C."/>
            <person name="Blandin G."/>
            <person name="Renauld H."/>
            <person name="Bartholomeu D.C."/>
            <person name="Lennard N.J."/>
            <person name="Caler E."/>
            <person name="Hamlin N.E."/>
            <person name="Haas B."/>
            <person name="Bohme U."/>
            <person name="Hannick L."/>
            <person name="Aslett M.A."/>
            <person name="Shallom J."/>
            <person name="Marcello L."/>
            <person name="Hou L."/>
            <person name="Wickstead B."/>
            <person name="Alsmark U.C.M."/>
            <person name="Arrowsmith C."/>
            <person name="Atkin R.J."/>
            <person name="Barron A.J."/>
            <person name="Bringaud F."/>
            <person name="Brooks K."/>
            <person name="Carrington M."/>
            <person name="Cherevach I."/>
            <person name="Chillingworth T.J."/>
            <person name="Churcher C."/>
            <person name="Clark L.N."/>
            <person name="Corton C.H."/>
            <person name="Cronin A."/>
            <person name="Davies R.M."/>
            <person name="Doggett J."/>
            <person name="Djikeng A."/>
            <person name="Feldblyum T."/>
            <person name="Field M.C."/>
            <person name="Fraser A."/>
            <person name="Goodhead I."/>
            <person name="Hance Z."/>
            <person name="Harper D."/>
            <person name="Harris B.R."/>
            <person name="Hauser H."/>
            <person name="Hostetler J."/>
            <person name="Ivens A."/>
            <person name="Jagels K."/>
            <person name="Johnson D."/>
            <person name="Johnson J."/>
            <person name="Jones K."/>
            <person name="Kerhornou A.X."/>
            <person name="Koo H."/>
            <person name="Larke N."/>
            <person name="Landfear S."/>
            <person name="Larkin C."/>
            <person name="Leech V."/>
            <person name="Line A."/>
            <person name="Lord A."/>
            <person name="Macleod A."/>
            <person name="Mooney P.J."/>
            <person name="Moule S."/>
            <person name="Martin D.M."/>
            <person name="Morgan G.W."/>
            <person name="Mungall K."/>
            <person name="Norbertczak H."/>
            <person name="Ormond D."/>
            <person name="Pai G."/>
            <person name="Peacock C.S."/>
            <person name="Peterson J."/>
            <person name="Quail M.A."/>
            <person name="Rabbinowitsch E."/>
            <person name="Rajandream M.A."/>
            <person name="Reitter C."/>
            <person name="Salzberg S.L."/>
            <person name="Sanders M."/>
            <person name="Schobel S."/>
            <person name="Sharp S."/>
            <person name="Simmonds M."/>
            <person name="Simpson A.J."/>
            <person name="Tallon L."/>
            <person name="Turner C.M."/>
            <person name="Tait A."/>
            <person name="Tivey A.R."/>
            <person name="Van Aken S."/>
            <person name="Walker D."/>
            <person name="Wanless D."/>
            <person name="Wang S."/>
            <person name="White B."/>
            <person name="White O."/>
            <person name="Whitehead S."/>
            <person name="Woodward J."/>
            <person name="Wortman J."/>
            <person name="Adams M.D."/>
            <person name="Embley T.M."/>
            <person name="Gull K."/>
            <person name="Ullu E."/>
            <person name="Barry J.D."/>
            <person name="Fairlamb A.H."/>
            <person name="Opperdoes F."/>
            <person name="Barrell B.G."/>
            <person name="Donelson J.E."/>
            <person name="Hall N."/>
            <person name="Fraser C.M."/>
            <person name="Melville S.E."/>
            <person name="El-Sayed N.M.A."/>
        </authorList>
    </citation>
    <scope>NUCLEOTIDE SEQUENCE [LARGE SCALE GENOMIC DNA]</scope>
    <source>
        <strain evidence="11">927/4 GUTat10.1</strain>
    </source>
</reference>
<reference evidence="8" key="3">
    <citation type="journal article" date="2006" name="Cell">
        <title>Fatty acid synthesis by elongases in trypanosomes.</title>
        <authorList>
            <person name="Lee S.H."/>
            <person name="Stephens J.L."/>
            <person name="Paul K.S."/>
            <person name="Englund P.T."/>
        </authorList>
    </citation>
    <scope>FUNCTION</scope>
    <scope>CATALYTIC ACTIVITY</scope>
    <scope>SUBSTRATE SPECIFICITY</scope>
    <scope>PATHWAY</scope>
    <scope>DISRUPTION PHENOTYPE</scope>
</reference>
<protein>
    <recommendedName>
        <fullName evidence="7">Fatty acid elongase 2</fullName>
        <ecNumber evidence="6">2.3.1.-</ecNumber>
    </recommendedName>
    <alternativeName>
        <fullName evidence="7">Beta-ketoacyl-CoA synthase</fullName>
    </alternativeName>
    <alternativeName>
        <fullName evidence="5">Elongation of fatty acids protein</fullName>
    </alternativeName>
</protein>
<accession>Q57UP7</accession>
<accession>D6XIU8</accession>
<comment type="function">
    <text evidence="6">Involved in the synthesis of fatty acids (PubMed:16923389). Elongates C10 fatty acids to C14 (PubMed:16923389).</text>
</comment>
<comment type="catalytic activity">
    <reaction evidence="6">
        <text>an acyl-CoA + malonyl-CoA + H(+) = a 3-oxoacyl-CoA + CO2 + CoA</text>
        <dbReference type="Rhea" id="RHEA:50252"/>
        <dbReference type="ChEBI" id="CHEBI:15378"/>
        <dbReference type="ChEBI" id="CHEBI:16526"/>
        <dbReference type="ChEBI" id="CHEBI:57287"/>
        <dbReference type="ChEBI" id="CHEBI:57384"/>
        <dbReference type="ChEBI" id="CHEBI:58342"/>
        <dbReference type="ChEBI" id="CHEBI:90726"/>
    </reaction>
    <physiologicalReaction direction="left-to-right" evidence="6">
        <dbReference type="Rhea" id="RHEA:50253"/>
    </physiologicalReaction>
</comment>
<comment type="pathway">
    <text evidence="6">Lipid metabolism; fatty acid biosynthesis.</text>
</comment>
<comment type="subcellular location">
    <subcellularLocation>
        <location evidence="2">Endoplasmic reticulum membrane</location>
        <topology evidence="3">Multi-pass membrane protein</topology>
    </subcellularLocation>
</comment>
<comment type="disruption phenotype">
    <text evidence="6">Genetic disruption in bloodstream form parasites reduces fatty acid synthesis from C10- and C12-CoA primers.</text>
</comment>
<comment type="similarity">
    <text evidence="5">Belongs to the ELO family.</text>
</comment>
<organism evidence="11">
    <name type="scientific">Trypanosoma brucei brucei (strain 927/4 GUTat10.1)</name>
    <dbReference type="NCBI Taxonomy" id="185431"/>
    <lineage>
        <taxon>Eukaryota</taxon>
        <taxon>Discoba</taxon>
        <taxon>Euglenozoa</taxon>
        <taxon>Kinetoplastea</taxon>
        <taxon>Metakinetoplastina</taxon>
        <taxon>Trypanosomatida</taxon>
        <taxon>Trypanosomatidae</taxon>
        <taxon>Trypanosoma</taxon>
    </lineage>
</organism>
<evidence type="ECO:0000250" key="1">
    <source>
        <dbReference type="UniProtKB" id="A1L3X0"/>
    </source>
</evidence>
<evidence type="ECO:0000250" key="2">
    <source>
        <dbReference type="UniProtKB" id="Q4DHY2"/>
    </source>
</evidence>
<evidence type="ECO:0000255" key="3"/>
<evidence type="ECO:0000255" key="4">
    <source>
        <dbReference type="PROSITE-ProRule" id="PRU00498"/>
    </source>
</evidence>
<evidence type="ECO:0000255" key="5">
    <source>
        <dbReference type="RuleBase" id="RU361115"/>
    </source>
</evidence>
<evidence type="ECO:0000269" key="6">
    <source>
    </source>
</evidence>
<evidence type="ECO:0000303" key="7">
    <source>
    </source>
</evidence>
<evidence type="ECO:0000305" key="8"/>
<evidence type="ECO:0000312" key="9">
    <source>
        <dbReference type="EMBL" id="AAX70672.1"/>
    </source>
</evidence>
<evidence type="ECO:0000312" key="10">
    <source>
        <dbReference type="EMBL" id="AAZ12481.1"/>
    </source>
</evidence>
<evidence type="ECO:0000312" key="11">
    <source>
        <dbReference type="Proteomes" id="UP000008524"/>
    </source>
</evidence>
<proteinExistence type="evidence at protein level"/>
<gene>
    <name evidence="7" type="primary">ELO2</name>
    <name evidence="10" type="ORF">Tb07.5F10.380</name>
    <name evidence="9" type="ORF">Tb927.7.4170</name>
</gene>
<keyword id="KW-0256">Endoplasmic reticulum</keyword>
<keyword id="KW-0275">Fatty acid biosynthesis</keyword>
<keyword id="KW-0276">Fatty acid metabolism</keyword>
<keyword id="KW-0325">Glycoprotein</keyword>
<keyword id="KW-0444">Lipid biosynthesis</keyword>
<keyword id="KW-0443">Lipid metabolism</keyword>
<keyword id="KW-0472">Membrane</keyword>
<keyword id="KW-1185">Reference proteome</keyword>
<keyword id="KW-0808">Transferase</keyword>
<keyword id="KW-0812">Transmembrane</keyword>
<keyword id="KW-1133">Transmembrane helix</keyword>
<name>ELO2_TRYB2</name>
<sequence>MFPYVTDYSGFAIRKWMIDNVDVAGFLCLLYLGLVWKGPGVVKSLREKNLINATLLQGVFIMWNLFLSTFSVIGMIVVVPAAIAHISNKGLVPALCERDVNMIYDSPVGFWVGVFALSKIPELFDTVLLVLQGKQPPFLHWYHHTTVLIFSWQSYCEGSSTIFVFVAMNLTVHAVMYFYFAMCASGFKAIMRTIAPVITIMQILQMIVGSAVTMYSAYVLYNPQPDGPQTCDVTKASARMGVVMYLSYLYLFAALFVESYLKPKKRTEKSK</sequence>
<dbReference type="EC" id="2.3.1.-" evidence="6"/>
<dbReference type="EMBL" id="CP000070">
    <property type="protein sequence ID" value="AAZ12481.1"/>
    <property type="molecule type" value="Genomic_DNA"/>
</dbReference>
<dbReference type="EMBL" id="AC159450">
    <property type="protein sequence ID" value="AAX70672.1"/>
    <property type="molecule type" value="Genomic_DNA"/>
</dbReference>
<dbReference type="RefSeq" id="XP_846040.1">
    <property type="nucleotide sequence ID" value="XM_840947.1"/>
</dbReference>
<dbReference type="SMR" id="Q57UP7"/>
<dbReference type="FunCoup" id="Q57UP7">
    <property type="interactions" value="171"/>
</dbReference>
<dbReference type="STRING" id="185431.Q57UP7"/>
<dbReference type="PaxDb" id="5691-AAZ12481"/>
<dbReference type="GeneID" id="3658633"/>
<dbReference type="KEGG" id="tbr:Tb927.7.4170"/>
<dbReference type="VEuPathDB" id="TriTrypDB:Tb927.7.4170"/>
<dbReference type="eggNOG" id="KOG3072">
    <property type="taxonomic scope" value="Eukaryota"/>
</dbReference>
<dbReference type="InParanoid" id="Q57UP7"/>
<dbReference type="OMA" id="LSMIVWN"/>
<dbReference type="OrthoDB" id="434092at2759"/>
<dbReference type="UniPathway" id="UPA00094"/>
<dbReference type="Proteomes" id="UP000008524">
    <property type="component" value="Chromosome 7"/>
</dbReference>
<dbReference type="GO" id="GO:0005783">
    <property type="term" value="C:endoplasmic reticulum"/>
    <property type="evidence" value="ECO:0000314"/>
    <property type="project" value="GeneDB"/>
</dbReference>
<dbReference type="GO" id="GO:0005789">
    <property type="term" value="C:endoplasmic reticulum membrane"/>
    <property type="evidence" value="ECO:0000318"/>
    <property type="project" value="GO_Central"/>
</dbReference>
<dbReference type="GO" id="GO:0005634">
    <property type="term" value="C:nucleus"/>
    <property type="evidence" value="ECO:0000314"/>
    <property type="project" value="GeneDB"/>
</dbReference>
<dbReference type="GO" id="GO:0009922">
    <property type="term" value="F:fatty acid elongase activity"/>
    <property type="evidence" value="ECO:0000314"/>
    <property type="project" value="GeneDB"/>
</dbReference>
<dbReference type="GO" id="GO:0030497">
    <property type="term" value="P:fatty acid elongation"/>
    <property type="evidence" value="ECO:0000315"/>
    <property type="project" value="GeneDB"/>
</dbReference>
<dbReference type="GO" id="GO:0034625">
    <property type="term" value="P:fatty acid elongation, monounsaturated fatty acid"/>
    <property type="evidence" value="ECO:0000318"/>
    <property type="project" value="GO_Central"/>
</dbReference>
<dbReference type="GO" id="GO:0034626">
    <property type="term" value="P:fatty acid elongation, polyunsaturated fatty acid"/>
    <property type="evidence" value="ECO:0000318"/>
    <property type="project" value="GO_Central"/>
</dbReference>
<dbReference type="GO" id="GO:0019367">
    <property type="term" value="P:fatty acid elongation, saturated fatty acid"/>
    <property type="evidence" value="ECO:0000318"/>
    <property type="project" value="GO_Central"/>
</dbReference>
<dbReference type="GO" id="GO:0042759">
    <property type="term" value="P:long-chain fatty acid biosynthetic process"/>
    <property type="evidence" value="ECO:0000314"/>
    <property type="project" value="GeneDB"/>
</dbReference>
<dbReference type="GO" id="GO:0030148">
    <property type="term" value="P:sphingolipid biosynthetic process"/>
    <property type="evidence" value="ECO:0000318"/>
    <property type="project" value="GO_Central"/>
</dbReference>
<dbReference type="GO" id="GO:0042761">
    <property type="term" value="P:very long-chain fatty acid biosynthetic process"/>
    <property type="evidence" value="ECO:0000318"/>
    <property type="project" value="GO_Central"/>
</dbReference>
<dbReference type="InterPro" id="IPR002076">
    <property type="entry name" value="ELO_fam"/>
</dbReference>
<dbReference type="PANTHER" id="PTHR11157:SF161">
    <property type="entry name" value="ELONGATION OF FATTY ACIDS PROTEIN"/>
    <property type="match status" value="1"/>
</dbReference>
<dbReference type="PANTHER" id="PTHR11157">
    <property type="entry name" value="FATTY ACID ACYL TRANSFERASE-RELATED"/>
    <property type="match status" value="1"/>
</dbReference>
<dbReference type="Pfam" id="PF01151">
    <property type="entry name" value="ELO"/>
    <property type="match status" value="1"/>
</dbReference>